<gene>
    <name type="primary">potC</name>
    <name type="ordered locus">b1124</name>
    <name type="ordered locus">JW1110</name>
</gene>
<keyword id="KW-0002">3D-structure</keyword>
<keyword id="KW-0997">Cell inner membrane</keyword>
<keyword id="KW-1003">Cell membrane</keyword>
<keyword id="KW-0472">Membrane</keyword>
<keyword id="KW-1185">Reference proteome</keyword>
<keyword id="KW-0812">Transmembrane</keyword>
<keyword id="KW-1133">Transmembrane helix</keyword>
<keyword id="KW-0813">Transport</keyword>
<organism>
    <name type="scientific">Escherichia coli (strain K12)</name>
    <dbReference type="NCBI Taxonomy" id="83333"/>
    <lineage>
        <taxon>Bacteria</taxon>
        <taxon>Pseudomonadati</taxon>
        <taxon>Pseudomonadota</taxon>
        <taxon>Gammaproteobacteria</taxon>
        <taxon>Enterobacterales</taxon>
        <taxon>Enterobacteriaceae</taxon>
        <taxon>Escherichia</taxon>
    </lineage>
</organism>
<feature type="chain" id="PRO_0000060181" description="Spermidine/putrescine transport system permease protein PotC">
    <location>
        <begin position="1"/>
        <end position="264"/>
    </location>
</feature>
<feature type="topological domain" description="Cytoplasmic" evidence="1">
    <location>
        <begin position="1"/>
        <end position="7"/>
    </location>
</feature>
<feature type="transmembrane region" description="Helical" evidence="2">
    <location>
        <begin position="8"/>
        <end position="27"/>
    </location>
</feature>
<feature type="topological domain" description="Periplasmic" evidence="1">
    <location>
        <begin position="28"/>
        <end position="65"/>
    </location>
</feature>
<feature type="transmembrane region" description="Helical" evidence="2">
    <location>
        <begin position="66"/>
        <end position="85"/>
    </location>
</feature>
<feature type="topological domain" description="Cytoplasmic" evidence="1">
    <location>
        <begin position="86"/>
        <end position="100"/>
    </location>
</feature>
<feature type="transmembrane region" description="Helical" evidence="2">
    <location>
        <begin position="101"/>
        <end position="120"/>
    </location>
</feature>
<feature type="topological domain" description="Periplasmic" evidence="1">
    <location>
        <begin position="121"/>
        <end position="128"/>
    </location>
</feature>
<feature type="transmembrane region" description="Helical" evidence="2">
    <location>
        <begin position="129"/>
        <end position="148"/>
    </location>
</feature>
<feature type="topological domain" description="Cytoplasmic" evidence="1">
    <location>
        <begin position="149"/>
        <end position="176"/>
    </location>
</feature>
<feature type="transmembrane region" description="Helical" evidence="2">
    <location>
        <begin position="177"/>
        <end position="196"/>
    </location>
</feature>
<feature type="topological domain" description="Periplasmic" evidence="1">
    <location>
        <begin position="197"/>
        <end position="231"/>
    </location>
</feature>
<feature type="transmembrane region" description="Helical" evidence="2">
    <location>
        <begin position="232"/>
        <end position="251"/>
    </location>
</feature>
<feature type="topological domain" description="Cytoplasmic" evidence="1">
    <location>
        <begin position="252"/>
        <end position="264"/>
    </location>
</feature>
<feature type="domain" description="ABC transmembrane type-1" evidence="2">
    <location>
        <begin position="60"/>
        <end position="248"/>
    </location>
</feature>
<evidence type="ECO:0000255" key="1"/>
<evidence type="ECO:0000255" key="2">
    <source>
        <dbReference type="PROSITE-ProRule" id="PRU00441"/>
    </source>
</evidence>
<evidence type="ECO:0000269" key="3">
    <source>
    </source>
</evidence>
<evidence type="ECO:0000305" key="4"/>
<dbReference type="EMBL" id="M64519">
    <property type="protein sequence ID" value="AAC37040.1"/>
    <property type="molecule type" value="Genomic_DNA"/>
</dbReference>
<dbReference type="EMBL" id="U00096">
    <property type="protein sequence ID" value="AAC74208.1"/>
    <property type="molecule type" value="Genomic_DNA"/>
</dbReference>
<dbReference type="EMBL" id="AP009048">
    <property type="protein sequence ID" value="BAA35944.1"/>
    <property type="molecule type" value="Genomic_DNA"/>
</dbReference>
<dbReference type="PIR" id="C40840">
    <property type="entry name" value="C40840"/>
</dbReference>
<dbReference type="RefSeq" id="NP_415642.1">
    <property type="nucleotide sequence ID" value="NC_000913.3"/>
</dbReference>
<dbReference type="RefSeq" id="WP_000580316.1">
    <property type="nucleotide sequence ID" value="NZ_SSUV01000046.1"/>
</dbReference>
<dbReference type="PDB" id="8Y5F">
    <property type="method" value="EM"/>
    <property type="resolution" value="3.13 A"/>
    <property type="chains" value="C=1-264"/>
</dbReference>
<dbReference type="PDB" id="8Y5G">
    <property type="method" value="EM"/>
    <property type="resolution" value="3.00 A"/>
    <property type="chains" value="C=5-253"/>
</dbReference>
<dbReference type="PDB" id="8Y5H">
    <property type="method" value="EM"/>
    <property type="resolution" value="3.10 A"/>
    <property type="chains" value="C=1-264"/>
</dbReference>
<dbReference type="PDB" id="8Y5I">
    <property type="method" value="EM"/>
    <property type="resolution" value="3.00 A"/>
    <property type="chains" value="C=1-264"/>
</dbReference>
<dbReference type="PDB" id="8ZX1">
    <property type="method" value="EM"/>
    <property type="resolution" value="3.50 A"/>
    <property type="chains" value="C=1-264"/>
</dbReference>
<dbReference type="PDBsum" id="8Y5F"/>
<dbReference type="PDBsum" id="8Y5G"/>
<dbReference type="PDBsum" id="8Y5H"/>
<dbReference type="PDBsum" id="8Y5I"/>
<dbReference type="PDBsum" id="8ZX1"/>
<dbReference type="EMDB" id="EMD-38933"/>
<dbReference type="EMDB" id="EMD-38936"/>
<dbReference type="EMDB" id="EMD-60536"/>
<dbReference type="SMR" id="P0AFK6"/>
<dbReference type="BioGRID" id="4260092">
    <property type="interactions" value="49"/>
</dbReference>
<dbReference type="ComplexPortal" id="CPX-4383">
    <property type="entry name" value="Spermidine ABC transporter complex"/>
</dbReference>
<dbReference type="DIP" id="DIP-48152N"/>
<dbReference type="FunCoup" id="P0AFK6">
    <property type="interactions" value="265"/>
</dbReference>
<dbReference type="IntAct" id="P0AFK6">
    <property type="interactions" value="1"/>
</dbReference>
<dbReference type="STRING" id="511145.b1124"/>
<dbReference type="TCDB" id="3.A.1.11.1">
    <property type="family name" value="the atp-binding cassette (abc) superfamily"/>
</dbReference>
<dbReference type="jPOST" id="P0AFK6"/>
<dbReference type="PaxDb" id="511145-b1124"/>
<dbReference type="EnsemblBacteria" id="AAC74208">
    <property type="protein sequence ID" value="AAC74208"/>
    <property type="gene ID" value="b1124"/>
</dbReference>
<dbReference type="GeneID" id="93776286"/>
<dbReference type="GeneID" id="945691"/>
<dbReference type="KEGG" id="ecj:JW1110"/>
<dbReference type="KEGG" id="eco:b1124"/>
<dbReference type="KEGG" id="ecoc:C3026_06765"/>
<dbReference type="PATRIC" id="fig|1411691.4.peg.1143"/>
<dbReference type="EchoBASE" id="EB0744"/>
<dbReference type="eggNOG" id="COG1177">
    <property type="taxonomic scope" value="Bacteria"/>
</dbReference>
<dbReference type="HOGENOM" id="CLU_016047_3_0_6"/>
<dbReference type="InParanoid" id="P0AFK6"/>
<dbReference type="OMA" id="NKFGMKW"/>
<dbReference type="OrthoDB" id="9782004at2"/>
<dbReference type="PhylomeDB" id="P0AFK6"/>
<dbReference type="BioCyc" id="EcoCyc:POTC-MONOMER"/>
<dbReference type="BioCyc" id="MetaCyc:POTC-MONOMER"/>
<dbReference type="PRO" id="PR:P0AFK6"/>
<dbReference type="Proteomes" id="UP000000625">
    <property type="component" value="Chromosome"/>
</dbReference>
<dbReference type="GO" id="GO:0043190">
    <property type="term" value="C:ATP-binding cassette (ABC) transporter complex"/>
    <property type="evidence" value="ECO:0000304"/>
    <property type="project" value="EcoCyc"/>
</dbReference>
<dbReference type="GO" id="GO:0016020">
    <property type="term" value="C:membrane"/>
    <property type="evidence" value="ECO:0000303"/>
    <property type="project" value="ComplexPortal"/>
</dbReference>
<dbReference type="GO" id="GO:0005886">
    <property type="term" value="C:plasma membrane"/>
    <property type="evidence" value="ECO:0000314"/>
    <property type="project" value="EcoCyc"/>
</dbReference>
<dbReference type="GO" id="GO:0015417">
    <property type="term" value="F:ABC-type polyamine transporter activity"/>
    <property type="evidence" value="ECO:0000314"/>
    <property type="project" value="EcoCyc"/>
</dbReference>
<dbReference type="GO" id="GO:0015847">
    <property type="term" value="P:putrescine transport"/>
    <property type="evidence" value="ECO:0000314"/>
    <property type="project" value="EcoCyc"/>
</dbReference>
<dbReference type="GO" id="GO:1903711">
    <property type="term" value="P:spermidine transmembrane transport"/>
    <property type="evidence" value="ECO:0000314"/>
    <property type="project" value="EcoCyc"/>
</dbReference>
<dbReference type="CDD" id="cd06261">
    <property type="entry name" value="TM_PBP2"/>
    <property type="match status" value="1"/>
</dbReference>
<dbReference type="FunFam" id="1.10.3720.10:FF:000013">
    <property type="entry name" value="Spermidine/putrescine ABC transporter permease PotC"/>
    <property type="match status" value="1"/>
</dbReference>
<dbReference type="Gene3D" id="1.10.3720.10">
    <property type="entry name" value="MetI-like"/>
    <property type="match status" value="1"/>
</dbReference>
<dbReference type="InterPro" id="IPR051789">
    <property type="entry name" value="Bact_Polyamine_Transport"/>
</dbReference>
<dbReference type="InterPro" id="IPR000515">
    <property type="entry name" value="MetI-like"/>
</dbReference>
<dbReference type="InterPro" id="IPR035906">
    <property type="entry name" value="MetI-like_sf"/>
</dbReference>
<dbReference type="NCBIfam" id="NF007047">
    <property type="entry name" value="PRK09500.1"/>
    <property type="match status" value="1"/>
</dbReference>
<dbReference type="PANTHER" id="PTHR43848">
    <property type="entry name" value="PUTRESCINE TRANSPORT SYSTEM PERMEASE PROTEIN POTI"/>
    <property type="match status" value="1"/>
</dbReference>
<dbReference type="PANTHER" id="PTHR43848:SF5">
    <property type="entry name" value="SPERMIDINE_PUTRESCINE TRANSPORT SYSTEM PERMEASE PROTEIN POTC"/>
    <property type="match status" value="1"/>
</dbReference>
<dbReference type="Pfam" id="PF00528">
    <property type="entry name" value="BPD_transp_1"/>
    <property type="match status" value="1"/>
</dbReference>
<dbReference type="SUPFAM" id="SSF161098">
    <property type="entry name" value="MetI-like"/>
    <property type="match status" value="1"/>
</dbReference>
<dbReference type="PROSITE" id="PS50928">
    <property type="entry name" value="ABC_TM1"/>
    <property type="match status" value="1"/>
</dbReference>
<reference key="1">
    <citation type="journal article" date="1991" name="J. Biol. Chem.">
        <title>Characteristics of the gene for a spermidine and putrescine transport system that maps at 15 min on the Escherichia coli chromosome.</title>
        <authorList>
            <person name="Furuchi T."/>
            <person name="Kashiwagi K."/>
            <person name="Kobayashi H."/>
            <person name="Igarashi K."/>
        </authorList>
    </citation>
    <scope>NUCLEOTIDE SEQUENCE [GENOMIC DNA]</scope>
    <source>
        <strain>K12</strain>
    </source>
</reference>
<reference key="2">
    <citation type="journal article" date="1996" name="DNA Res.">
        <title>A 718-kb DNA sequence of the Escherichia coli K-12 genome corresponding to the 12.7-28.0 min region on the linkage map.</title>
        <authorList>
            <person name="Oshima T."/>
            <person name="Aiba H."/>
            <person name="Baba T."/>
            <person name="Fujita K."/>
            <person name="Hayashi K."/>
            <person name="Honjo A."/>
            <person name="Ikemoto K."/>
            <person name="Inada T."/>
            <person name="Itoh T."/>
            <person name="Kajihara M."/>
            <person name="Kanai K."/>
            <person name="Kashimoto K."/>
            <person name="Kimura S."/>
            <person name="Kitagawa M."/>
            <person name="Makino K."/>
            <person name="Masuda S."/>
            <person name="Miki T."/>
            <person name="Mizobuchi K."/>
            <person name="Mori H."/>
            <person name="Motomura K."/>
            <person name="Nakamura Y."/>
            <person name="Nashimoto H."/>
            <person name="Nishio Y."/>
            <person name="Saito N."/>
            <person name="Sampei G."/>
            <person name="Seki Y."/>
            <person name="Tagami H."/>
            <person name="Takemoto K."/>
            <person name="Wada C."/>
            <person name="Yamamoto Y."/>
            <person name="Yano M."/>
            <person name="Horiuchi T."/>
        </authorList>
    </citation>
    <scope>NUCLEOTIDE SEQUENCE [LARGE SCALE GENOMIC DNA]</scope>
    <source>
        <strain>K12 / W3110 / ATCC 27325 / DSM 5911</strain>
    </source>
</reference>
<reference key="3">
    <citation type="journal article" date="1997" name="Science">
        <title>The complete genome sequence of Escherichia coli K-12.</title>
        <authorList>
            <person name="Blattner F.R."/>
            <person name="Plunkett G. III"/>
            <person name="Bloch C.A."/>
            <person name="Perna N.T."/>
            <person name="Burland V."/>
            <person name="Riley M."/>
            <person name="Collado-Vides J."/>
            <person name="Glasner J.D."/>
            <person name="Rode C.K."/>
            <person name="Mayhew G.F."/>
            <person name="Gregor J."/>
            <person name="Davis N.W."/>
            <person name="Kirkpatrick H.A."/>
            <person name="Goeden M.A."/>
            <person name="Rose D.J."/>
            <person name="Mau B."/>
            <person name="Shao Y."/>
        </authorList>
    </citation>
    <scope>NUCLEOTIDE SEQUENCE [LARGE SCALE GENOMIC DNA]</scope>
    <source>
        <strain>K12 / MG1655 / ATCC 47076</strain>
    </source>
</reference>
<reference key="4">
    <citation type="journal article" date="2006" name="Mol. Syst. Biol.">
        <title>Highly accurate genome sequences of Escherichia coli K-12 strains MG1655 and W3110.</title>
        <authorList>
            <person name="Hayashi K."/>
            <person name="Morooka N."/>
            <person name="Yamamoto Y."/>
            <person name="Fujita K."/>
            <person name="Isono K."/>
            <person name="Choi S."/>
            <person name="Ohtsubo E."/>
            <person name="Baba T."/>
            <person name="Wanner B.L."/>
            <person name="Mori H."/>
            <person name="Horiuchi T."/>
        </authorList>
    </citation>
    <scope>NUCLEOTIDE SEQUENCE [LARGE SCALE GENOMIC DNA]</scope>
    <source>
        <strain>K12 / W3110 / ATCC 27325 / DSM 5911</strain>
    </source>
</reference>
<reference key="5">
    <citation type="journal article" date="2005" name="Science">
        <title>Global topology analysis of the Escherichia coli inner membrane proteome.</title>
        <authorList>
            <person name="Daley D.O."/>
            <person name="Rapp M."/>
            <person name="Granseth E."/>
            <person name="Melen K."/>
            <person name="Drew D."/>
            <person name="von Heijne G."/>
        </authorList>
    </citation>
    <scope>SUBCELLULAR LOCATION</scope>
    <source>
        <strain>K12 / MG1655 / ATCC 47076</strain>
    </source>
</reference>
<protein>
    <recommendedName>
        <fullName>Spermidine/putrescine transport system permease protein PotC</fullName>
    </recommendedName>
</protein>
<sequence>MIGRLLRGGFMTAIYAYLYIPIIILIVNSFNSSRFGINWQGFTTKWYSLLMNNDSLLQAAQHSLTMAVFSATFATLIGSLTAVALYRYRFRGKPFVSGMLFVVMMSPDIVMAISLLVLFMLLGIQLGFWSLLFSHITFCLPFVVVTVYSRLKGFDVRMLEAAKDLGASEFTILRKIILPLAMPAVAAGWVLSFTLSMDDVVVSSFVTGPSYEILPLKIYSMVKVGVSPEVNALATILLVLSLVMVIASQLIARDKTKGNTGDVK</sequence>
<name>POTC_ECOLI</name>
<comment type="function">
    <text>Required for the activity of the bacterial periplasmic transport system of putrescine and spermidine.</text>
</comment>
<comment type="subcellular location">
    <subcellularLocation>
        <location evidence="3">Cell inner membrane</location>
        <topology evidence="2 3">Multi-pass membrane protein</topology>
    </subcellularLocation>
</comment>
<comment type="similarity">
    <text evidence="4">Belongs to the binding-protein-dependent transport system permease family. CysTW subfamily.</text>
</comment>
<accession>P0AFK6</accession>
<accession>P23859</accession>
<proteinExistence type="evidence at protein level"/>